<reference key="1">
    <citation type="journal article" date="2006" name="BMC Genomics">
        <title>Complete genome sequence of Shigella flexneri 5b and comparison with Shigella flexneri 2a.</title>
        <authorList>
            <person name="Nie H."/>
            <person name="Yang F."/>
            <person name="Zhang X."/>
            <person name="Yang J."/>
            <person name="Chen L."/>
            <person name="Wang J."/>
            <person name="Xiong Z."/>
            <person name="Peng J."/>
            <person name="Sun L."/>
            <person name="Dong J."/>
            <person name="Xue Y."/>
            <person name="Xu X."/>
            <person name="Chen S."/>
            <person name="Yao Z."/>
            <person name="Shen Y."/>
            <person name="Jin Q."/>
        </authorList>
    </citation>
    <scope>NUCLEOTIDE SEQUENCE [LARGE SCALE GENOMIC DNA]</scope>
    <source>
        <strain>8401</strain>
    </source>
</reference>
<comment type="function">
    <text evidence="1">Catalyzes the reversible aldol cleavage of N-acetylneuraminic acid (sialic acid; Neu5Ac) to form pyruvate and N-acetylmannosamine (ManNAc) via a Schiff base intermediate.</text>
</comment>
<comment type="catalytic activity">
    <reaction evidence="1">
        <text>aceneuramate = aldehydo-N-acetyl-D-mannosamine + pyruvate</text>
        <dbReference type="Rhea" id="RHEA:23296"/>
        <dbReference type="ChEBI" id="CHEBI:15361"/>
        <dbReference type="ChEBI" id="CHEBI:17122"/>
        <dbReference type="ChEBI" id="CHEBI:173083"/>
        <dbReference type="EC" id="4.1.3.3"/>
    </reaction>
</comment>
<comment type="pathway">
    <text evidence="1">Amino-sugar metabolism; N-acetylneuraminate degradation; D-fructose 6-phosphate from N-acetylneuraminate: step 1/5.</text>
</comment>
<comment type="subunit">
    <text evidence="1">Homotetramer.</text>
</comment>
<comment type="subcellular location">
    <subcellularLocation>
        <location evidence="1">Cytoplasm</location>
    </subcellularLocation>
</comment>
<comment type="similarity">
    <text evidence="1">Belongs to the DapA family. NanA subfamily.</text>
</comment>
<accession>Q0T065</accession>
<keyword id="KW-0119">Carbohydrate metabolism</keyword>
<keyword id="KW-0963">Cytoplasm</keyword>
<keyword id="KW-0456">Lyase</keyword>
<keyword id="KW-0704">Schiff base</keyword>
<evidence type="ECO:0000255" key="1">
    <source>
        <dbReference type="HAMAP-Rule" id="MF_01237"/>
    </source>
</evidence>
<protein>
    <recommendedName>
        <fullName evidence="1">N-acetylneuraminate lyase</fullName>
        <shortName evidence="1">NAL</shortName>
        <shortName evidence="1">Neu5Ac lyase</shortName>
        <ecNumber evidence="1">4.1.3.3</ecNumber>
    </recommendedName>
    <alternativeName>
        <fullName evidence="1">N-acetylneuraminate pyruvate-lyase</fullName>
    </alternativeName>
    <alternativeName>
        <fullName evidence="1">N-acetylneuraminic acid aldolase</fullName>
    </alternativeName>
    <alternativeName>
        <fullName evidence="1">Sialate lyase</fullName>
    </alternativeName>
    <alternativeName>
        <fullName evidence="1">Sialic acid aldolase</fullName>
    </alternativeName>
    <alternativeName>
        <fullName evidence="1">Sialic acid lyase</fullName>
    </alternativeName>
</protein>
<name>NANA_SHIF8</name>
<feature type="chain" id="PRO_1000066934" description="N-acetylneuraminate lyase">
    <location>
        <begin position="1"/>
        <end position="297"/>
    </location>
</feature>
<feature type="active site" description="Proton donor" evidence="1">
    <location>
        <position position="137"/>
    </location>
</feature>
<feature type="active site" description="Schiff-base intermediate with substrate" evidence="1">
    <location>
        <position position="165"/>
    </location>
</feature>
<feature type="binding site" evidence="1">
    <location>
        <position position="47"/>
    </location>
    <ligand>
        <name>aceneuramate</name>
        <dbReference type="ChEBI" id="CHEBI:173083"/>
    </ligand>
</feature>
<feature type="binding site" evidence="1">
    <location>
        <position position="48"/>
    </location>
    <ligand>
        <name>aceneuramate</name>
        <dbReference type="ChEBI" id="CHEBI:173083"/>
    </ligand>
</feature>
<feature type="binding site" evidence="1">
    <location>
        <position position="167"/>
    </location>
    <ligand>
        <name>aceneuramate</name>
        <dbReference type="ChEBI" id="CHEBI:173083"/>
    </ligand>
</feature>
<feature type="binding site" evidence="1">
    <location>
        <position position="189"/>
    </location>
    <ligand>
        <name>aceneuramate</name>
        <dbReference type="ChEBI" id="CHEBI:173083"/>
    </ligand>
</feature>
<feature type="binding site" evidence="1">
    <location>
        <position position="191"/>
    </location>
    <ligand>
        <name>aceneuramate</name>
        <dbReference type="ChEBI" id="CHEBI:173083"/>
    </ligand>
</feature>
<feature type="binding site" evidence="1">
    <location>
        <position position="192"/>
    </location>
    <ligand>
        <name>aceneuramate</name>
        <dbReference type="ChEBI" id="CHEBI:173083"/>
    </ligand>
</feature>
<feature type="binding site" evidence="1">
    <location>
        <position position="208"/>
    </location>
    <ligand>
        <name>aceneuramate</name>
        <dbReference type="ChEBI" id="CHEBI:173083"/>
    </ligand>
</feature>
<dbReference type="EC" id="4.1.3.3" evidence="1"/>
<dbReference type="EMBL" id="CP000266">
    <property type="protein sequence ID" value="ABF05300.1"/>
    <property type="molecule type" value="Genomic_DNA"/>
</dbReference>
<dbReference type="RefSeq" id="WP_000224714.1">
    <property type="nucleotide sequence ID" value="NC_008258.1"/>
</dbReference>
<dbReference type="SMR" id="Q0T065"/>
<dbReference type="GeneID" id="93778761"/>
<dbReference type="KEGG" id="sfv:SFV_3250"/>
<dbReference type="HOGENOM" id="CLU_049343_6_0_6"/>
<dbReference type="UniPathway" id="UPA00629">
    <property type="reaction ID" value="UER00680"/>
</dbReference>
<dbReference type="Proteomes" id="UP000000659">
    <property type="component" value="Chromosome"/>
</dbReference>
<dbReference type="GO" id="GO:0005829">
    <property type="term" value="C:cytosol"/>
    <property type="evidence" value="ECO:0007669"/>
    <property type="project" value="TreeGrafter"/>
</dbReference>
<dbReference type="GO" id="GO:0008747">
    <property type="term" value="F:N-acetylneuraminate lyase activity"/>
    <property type="evidence" value="ECO:0007669"/>
    <property type="project" value="UniProtKB-UniRule"/>
</dbReference>
<dbReference type="GO" id="GO:0005975">
    <property type="term" value="P:carbohydrate metabolic process"/>
    <property type="evidence" value="ECO:0007669"/>
    <property type="project" value="UniProtKB-UniRule"/>
</dbReference>
<dbReference type="GO" id="GO:0019262">
    <property type="term" value="P:N-acetylneuraminate catabolic process"/>
    <property type="evidence" value="ECO:0007669"/>
    <property type="project" value="UniProtKB-UniRule"/>
</dbReference>
<dbReference type="CDD" id="cd00954">
    <property type="entry name" value="NAL"/>
    <property type="match status" value="1"/>
</dbReference>
<dbReference type="FunFam" id="3.20.20.70:FF:000039">
    <property type="entry name" value="N-acetylneuraminate lyase"/>
    <property type="match status" value="1"/>
</dbReference>
<dbReference type="Gene3D" id="3.20.20.70">
    <property type="entry name" value="Aldolase class I"/>
    <property type="match status" value="1"/>
</dbReference>
<dbReference type="HAMAP" id="MF_01237">
    <property type="entry name" value="N_acetylneuram_lyase"/>
    <property type="match status" value="1"/>
</dbReference>
<dbReference type="InterPro" id="IPR013785">
    <property type="entry name" value="Aldolase_TIM"/>
</dbReference>
<dbReference type="InterPro" id="IPR002220">
    <property type="entry name" value="DapA-like"/>
</dbReference>
<dbReference type="InterPro" id="IPR005264">
    <property type="entry name" value="NanA"/>
</dbReference>
<dbReference type="InterPro" id="IPR020625">
    <property type="entry name" value="Schiff_base-form_aldolases_AS"/>
</dbReference>
<dbReference type="InterPro" id="IPR020624">
    <property type="entry name" value="Schiff_base-form_aldolases_CS"/>
</dbReference>
<dbReference type="NCBIfam" id="TIGR00683">
    <property type="entry name" value="nanA"/>
    <property type="match status" value="1"/>
</dbReference>
<dbReference type="NCBIfam" id="NF003164">
    <property type="entry name" value="PRK04147.1"/>
    <property type="match status" value="1"/>
</dbReference>
<dbReference type="PANTHER" id="PTHR42849">
    <property type="entry name" value="N-ACETYLNEURAMINATE LYASE"/>
    <property type="match status" value="1"/>
</dbReference>
<dbReference type="PANTHER" id="PTHR42849:SF1">
    <property type="entry name" value="N-ACETYLNEURAMINATE LYASE"/>
    <property type="match status" value="1"/>
</dbReference>
<dbReference type="Pfam" id="PF00701">
    <property type="entry name" value="DHDPS"/>
    <property type="match status" value="1"/>
</dbReference>
<dbReference type="PIRSF" id="PIRSF001365">
    <property type="entry name" value="DHDPS"/>
    <property type="match status" value="1"/>
</dbReference>
<dbReference type="PRINTS" id="PR00146">
    <property type="entry name" value="DHPICSNTHASE"/>
</dbReference>
<dbReference type="SMART" id="SM01130">
    <property type="entry name" value="DHDPS"/>
    <property type="match status" value="1"/>
</dbReference>
<dbReference type="SUPFAM" id="SSF51569">
    <property type="entry name" value="Aldolase"/>
    <property type="match status" value="1"/>
</dbReference>
<dbReference type="PROSITE" id="PS00665">
    <property type="entry name" value="DHDPS_1"/>
    <property type="match status" value="1"/>
</dbReference>
<dbReference type="PROSITE" id="PS00666">
    <property type="entry name" value="DHDPS_2"/>
    <property type="match status" value="1"/>
</dbReference>
<proteinExistence type="inferred from homology"/>
<gene>
    <name evidence="1" type="primary">nanA</name>
    <name type="ordered locus">SFV_3250</name>
</gene>
<sequence>MATNLRGVMAALLTPFDQQQALDKASLRRLVQFNIQQGIDGLYVGGSTGEAFVQSLSEREQVLEIVAEEAKGKIKLIAHVGCVSTAESQQLAASAKRYGFDAVSAVTPFYYPFSFEEHCDHYRAIIDSADGLPMVVYNIPALSGVKLTLDQINTLVTLPGVGALKQTSGDLYQMEQIRREHPDLVLYNGYDEIFASGLLAGADGGIGSTYNIMGWRYQGIVKALKEGDIQTAQKLQTECNKVIDLLIKTGVFRGLKTVLHYMDVVSVPLCRKPFGPVDEKYLPELKALAQQLMQERG</sequence>
<organism>
    <name type="scientific">Shigella flexneri serotype 5b (strain 8401)</name>
    <dbReference type="NCBI Taxonomy" id="373384"/>
    <lineage>
        <taxon>Bacteria</taxon>
        <taxon>Pseudomonadati</taxon>
        <taxon>Pseudomonadota</taxon>
        <taxon>Gammaproteobacteria</taxon>
        <taxon>Enterobacterales</taxon>
        <taxon>Enterobacteriaceae</taxon>
        <taxon>Shigella</taxon>
    </lineage>
</organism>